<proteinExistence type="inferred from homology"/>
<name>MURC_STAAC</name>
<organism>
    <name type="scientific">Staphylococcus aureus (strain COL)</name>
    <dbReference type="NCBI Taxonomy" id="93062"/>
    <lineage>
        <taxon>Bacteria</taxon>
        <taxon>Bacillati</taxon>
        <taxon>Bacillota</taxon>
        <taxon>Bacilli</taxon>
        <taxon>Bacillales</taxon>
        <taxon>Staphylococcaceae</taxon>
        <taxon>Staphylococcus</taxon>
    </lineage>
</organism>
<protein>
    <recommendedName>
        <fullName evidence="1">UDP-N-acetylmuramate--L-alanine ligase</fullName>
        <ecNumber evidence="1">6.3.2.8</ecNumber>
    </recommendedName>
    <alternativeName>
        <fullName evidence="1">UDP-N-acetylmuramoyl-L-alanine synthetase</fullName>
    </alternativeName>
</protein>
<sequence>MTHYHFVGIKGSGMSSLAQIMHDLGHEVQGSDIENYVFTEVALRNKGIKILPFDANNIKEDMVVIQGNAFASSHEEIVRAHQLKLDVVSYNDFLGQIIDQYTSVAVTGAHGKTSTTGLLSHVMNGDKKTSFLIGDGTGMGLPESDYFAFEACEYRRHFLSYKPDYAIMTNIDFDHPDYFKDINDVFDAFQEMAHNVKKGIIAWGDDEHLRKIEADVPIYYYGFKDSDDIYAQNIQITDKGTAFDVYVDGEFYDHFLSPQYGDHTVLNALAVIAISYLEKLDVTNIKEALETFGGVKRRFNETTIANQVIVDDYAHHPREISATIETARKKYPHKEVVAVFQPHTFSRTQAFLNEFAESLSKADRVFLCEIFGSIRENTGALTIQDLIDKIEGASLINEDSINVLEQFDNAVILFMGAGDIQKLQNAYLDKLGMKNAF</sequence>
<feature type="chain" id="PRO_0000182152" description="UDP-N-acetylmuramate--L-alanine ligase">
    <location>
        <begin position="1"/>
        <end position="437"/>
    </location>
</feature>
<feature type="binding site" evidence="1">
    <location>
        <begin position="108"/>
        <end position="114"/>
    </location>
    <ligand>
        <name>ATP</name>
        <dbReference type="ChEBI" id="CHEBI:30616"/>
    </ligand>
</feature>
<gene>
    <name evidence="1" type="primary">murC</name>
    <name type="ordered locus">SACOL1790</name>
</gene>
<comment type="function">
    <text evidence="1">Cell wall formation.</text>
</comment>
<comment type="catalytic activity">
    <reaction evidence="1">
        <text>UDP-N-acetyl-alpha-D-muramate + L-alanine + ATP = UDP-N-acetyl-alpha-D-muramoyl-L-alanine + ADP + phosphate + H(+)</text>
        <dbReference type="Rhea" id="RHEA:23372"/>
        <dbReference type="ChEBI" id="CHEBI:15378"/>
        <dbReference type="ChEBI" id="CHEBI:30616"/>
        <dbReference type="ChEBI" id="CHEBI:43474"/>
        <dbReference type="ChEBI" id="CHEBI:57972"/>
        <dbReference type="ChEBI" id="CHEBI:70757"/>
        <dbReference type="ChEBI" id="CHEBI:83898"/>
        <dbReference type="ChEBI" id="CHEBI:456216"/>
        <dbReference type="EC" id="6.3.2.8"/>
    </reaction>
</comment>
<comment type="pathway">
    <text evidence="1">Cell wall biogenesis; peptidoglycan biosynthesis.</text>
</comment>
<comment type="subcellular location">
    <subcellularLocation>
        <location evidence="1">Cytoplasm</location>
    </subcellularLocation>
</comment>
<comment type="similarity">
    <text evidence="1">Belongs to the MurCDEF family.</text>
</comment>
<keyword id="KW-0067">ATP-binding</keyword>
<keyword id="KW-0131">Cell cycle</keyword>
<keyword id="KW-0132">Cell division</keyword>
<keyword id="KW-0133">Cell shape</keyword>
<keyword id="KW-0961">Cell wall biogenesis/degradation</keyword>
<keyword id="KW-0963">Cytoplasm</keyword>
<keyword id="KW-0436">Ligase</keyword>
<keyword id="KW-0547">Nucleotide-binding</keyword>
<keyword id="KW-0573">Peptidoglycan synthesis</keyword>
<dbReference type="EC" id="6.3.2.8" evidence="1"/>
<dbReference type="EMBL" id="CP000046">
    <property type="protein sequence ID" value="AAW38318.1"/>
    <property type="molecule type" value="Genomic_DNA"/>
</dbReference>
<dbReference type="RefSeq" id="WP_000150168.1">
    <property type="nucleotide sequence ID" value="NZ_JBGOFO010000008.1"/>
</dbReference>
<dbReference type="SMR" id="Q5HF34"/>
<dbReference type="KEGG" id="sac:SACOL1790"/>
<dbReference type="HOGENOM" id="CLU_028104_1_0_9"/>
<dbReference type="UniPathway" id="UPA00219"/>
<dbReference type="Proteomes" id="UP000000530">
    <property type="component" value="Chromosome"/>
</dbReference>
<dbReference type="GO" id="GO:0005737">
    <property type="term" value="C:cytoplasm"/>
    <property type="evidence" value="ECO:0007669"/>
    <property type="project" value="UniProtKB-SubCell"/>
</dbReference>
<dbReference type="GO" id="GO:0005524">
    <property type="term" value="F:ATP binding"/>
    <property type="evidence" value="ECO:0007669"/>
    <property type="project" value="UniProtKB-UniRule"/>
</dbReference>
<dbReference type="GO" id="GO:0008763">
    <property type="term" value="F:UDP-N-acetylmuramate-L-alanine ligase activity"/>
    <property type="evidence" value="ECO:0007669"/>
    <property type="project" value="UniProtKB-UniRule"/>
</dbReference>
<dbReference type="GO" id="GO:0051301">
    <property type="term" value="P:cell division"/>
    <property type="evidence" value="ECO:0007669"/>
    <property type="project" value="UniProtKB-KW"/>
</dbReference>
<dbReference type="GO" id="GO:0071555">
    <property type="term" value="P:cell wall organization"/>
    <property type="evidence" value="ECO:0007669"/>
    <property type="project" value="UniProtKB-KW"/>
</dbReference>
<dbReference type="GO" id="GO:0009252">
    <property type="term" value="P:peptidoglycan biosynthetic process"/>
    <property type="evidence" value="ECO:0007669"/>
    <property type="project" value="UniProtKB-UniRule"/>
</dbReference>
<dbReference type="GO" id="GO:0008360">
    <property type="term" value="P:regulation of cell shape"/>
    <property type="evidence" value="ECO:0007669"/>
    <property type="project" value="UniProtKB-KW"/>
</dbReference>
<dbReference type="Gene3D" id="3.90.190.20">
    <property type="entry name" value="Mur ligase, C-terminal domain"/>
    <property type="match status" value="1"/>
</dbReference>
<dbReference type="Gene3D" id="3.40.1190.10">
    <property type="entry name" value="Mur-like, catalytic domain"/>
    <property type="match status" value="1"/>
</dbReference>
<dbReference type="Gene3D" id="3.40.50.720">
    <property type="entry name" value="NAD(P)-binding Rossmann-like Domain"/>
    <property type="match status" value="1"/>
</dbReference>
<dbReference type="HAMAP" id="MF_00046">
    <property type="entry name" value="MurC"/>
    <property type="match status" value="1"/>
</dbReference>
<dbReference type="InterPro" id="IPR036565">
    <property type="entry name" value="Mur-like_cat_sf"/>
</dbReference>
<dbReference type="InterPro" id="IPR004101">
    <property type="entry name" value="Mur_ligase_C"/>
</dbReference>
<dbReference type="InterPro" id="IPR036615">
    <property type="entry name" value="Mur_ligase_C_dom_sf"/>
</dbReference>
<dbReference type="InterPro" id="IPR013221">
    <property type="entry name" value="Mur_ligase_cen"/>
</dbReference>
<dbReference type="InterPro" id="IPR000713">
    <property type="entry name" value="Mur_ligase_N"/>
</dbReference>
<dbReference type="InterPro" id="IPR050061">
    <property type="entry name" value="MurCDEF_pg_biosynth"/>
</dbReference>
<dbReference type="InterPro" id="IPR005758">
    <property type="entry name" value="UDP-N-AcMur_Ala_ligase_MurC"/>
</dbReference>
<dbReference type="NCBIfam" id="TIGR01082">
    <property type="entry name" value="murC"/>
    <property type="match status" value="1"/>
</dbReference>
<dbReference type="PANTHER" id="PTHR43445:SF3">
    <property type="entry name" value="UDP-N-ACETYLMURAMATE--L-ALANINE LIGASE"/>
    <property type="match status" value="1"/>
</dbReference>
<dbReference type="PANTHER" id="PTHR43445">
    <property type="entry name" value="UDP-N-ACETYLMURAMATE--L-ALANINE LIGASE-RELATED"/>
    <property type="match status" value="1"/>
</dbReference>
<dbReference type="Pfam" id="PF01225">
    <property type="entry name" value="Mur_ligase"/>
    <property type="match status" value="1"/>
</dbReference>
<dbReference type="Pfam" id="PF02875">
    <property type="entry name" value="Mur_ligase_C"/>
    <property type="match status" value="1"/>
</dbReference>
<dbReference type="Pfam" id="PF08245">
    <property type="entry name" value="Mur_ligase_M"/>
    <property type="match status" value="1"/>
</dbReference>
<dbReference type="SUPFAM" id="SSF51984">
    <property type="entry name" value="MurCD N-terminal domain"/>
    <property type="match status" value="1"/>
</dbReference>
<dbReference type="SUPFAM" id="SSF53623">
    <property type="entry name" value="MurD-like peptide ligases, catalytic domain"/>
    <property type="match status" value="1"/>
</dbReference>
<dbReference type="SUPFAM" id="SSF53244">
    <property type="entry name" value="MurD-like peptide ligases, peptide-binding domain"/>
    <property type="match status" value="1"/>
</dbReference>
<reference key="1">
    <citation type="journal article" date="2005" name="J. Bacteriol.">
        <title>Insights on evolution of virulence and resistance from the complete genome analysis of an early methicillin-resistant Staphylococcus aureus strain and a biofilm-producing methicillin-resistant Staphylococcus epidermidis strain.</title>
        <authorList>
            <person name="Gill S.R."/>
            <person name="Fouts D.E."/>
            <person name="Archer G.L."/>
            <person name="Mongodin E.F."/>
            <person name="DeBoy R.T."/>
            <person name="Ravel J."/>
            <person name="Paulsen I.T."/>
            <person name="Kolonay J.F."/>
            <person name="Brinkac L.M."/>
            <person name="Beanan M.J."/>
            <person name="Dodson R.J."/>
            <person name="Daugherty S.C."/>
            <person name="Madupu R."/>
            <person name="Angiuoli S.V."/>
            <person name="Durkin A.S."/>
            <person name="Haft D.H."/>
            <person name="Vamathevan J.J."/>
            <person name="Khouri H."/>
            <person name="Utterback T.R."/>
            <person name="Lee C."/>
            <person name="Dimitrov G."/>
            <person name="Jiang L."/>
            <person name="Qin H."/>
            <person name="Weidman J."/>
            <person name="Tran K."/>
            <person name="Kang K.H."/>
            <person name="Hance I.R."/>
            <person name="Nelson K.E."/>
            <person name="Fraser C.M."/>
        </authorList>
    </citation>
    <scope>NUCLEOTIDE SEQUENCE [LARGE SCALE GENOMIC DNA]</scope>
    <source>
        <strain>COL</strain>
    </source>
</reference>
<evidence type="ECO:0000255" key="1">
    <source>
        <dbReference type="HAMAP-Rule" id="MF_00046"/>
    </source>
</evidence>
<accession>Q5HF34</accession>